<accession>Q13705</accession>
<accession>Q4VAV0</accession>
<dbReference type="EC" id="2.7.11.30"/>
<dbReference type="EMBL" id="X77533">
    <property type="protein sequence ID" value="CAA54671.1"/>
    <property type="molecule type" value="mRNA"/>
</dbReference>
<dbReference type="EMBL" id="AB008681">
    <property type="protein sequence ID" value="BAA24180.2"/>
    <property type="molecule type" value="Genomic_DNA"/>
</dbReference>
<dbReference type="EMBL" id="AF060202">
    <property type="protein sequence ID" value="AAC64515.1"/>
    <property type="molecule type" value="Genomic_DNA"/>
</dbReference>
<dbReference type="EMBL" id="AF060199">
    <property type="protein sequence ID" value="AAC64515.1"/>
    <property type="status" value="JOINED"/>
    <property type="molecule type" value="Genomic_DNA"/>
</dbReference>
<dbReference type="EMBL" id="AF060200">
    <property type="protein sequence ID" value="AAC64515.1"/>
    <property type="status" value="JOINED"/>
    <property type="molecule type" value="Genomic_DNA"/>
</dbReference>
<dbReference type="EMBL" id="AF060201">
    <property type="protein sequence ID" value="AAC64515.1"/>
    <property type="status" value="JOINED"/>
    <property type="molecule type" value="Genomic_DNA"/>
</dbReference>
<dbReference type="EMBL" id="BC096243">
    <property type="protein sequence ID" value="AAH96243.1"/>
    <property type="molecule type" value="mRNA"/>
</dbReference>
<dbReference type="EMBL" id="BC096244">
    <property type="protein sequence ID" value="AAH96244.1"/>
    <property type="molecule type" value="mRNA"/>
</dbReference>
<dbReference type="EMBL" id="BC099642">
    <property type="protein sequence ID" value="AAH99642.1"/>
    <property type="molecule type" value="mRNA"/>
</dbReference>
<dbReference type="CCDS" id="CCDS2679.1">
    <molecule id="Q13705-1"/>
</dbReference>
<dbReference type="PIR" id="I37134">
    <property type="entry name" value="I37134"/>
</dbReference>
<dbReference type="RefSeq" id="NP_001097.2">
    <molecule id="Q13705-1"/>
    <property type="nucleotide sequence ID" value="NM_001106.4"/>
</dbReference>
<dbReference type="PDB" id="2H62">
    <property type="method" value="X-ray"/>
    <property type="resolution" value="1.85 A"/>
    <property type="chains" value="D=19-116"/>
</dbReference>
<dbReference type="PDB" id="2QLU">
    <property type="method" value="X-ray"/>
    <property type="resolution" value="2.00 A"/>
    <property type="chains" value="A=190-487"/>
</dbReference>
<dbReference type="PDB" id="4FAO">
    <property type="method" value="X-ray"/>
    <property type="resolution" value="3.36 A"/>
    <property type="chains" value="E/F/K/L/Q/R/W/X/e/f/k/l=19-134"/>
</dbReference>
<dbReference type="PDB" id="5NGV">
    <property type="method" value="X-ray"/>
    <property type="resolution" value="2.00 A"/>
    <property type="chains" value="A=24-117"/>
</dbReference>
<dbReference type="PDB" id="5NHR">
    <property type="method" value="X-ray"/>
    <property type="resolution" value="3.35 A"/>
    <property type="chains" value="C/D=24-117"/>
</dbReference>
<dbReference type="PDB" id="7MRZ">
    <property type="method" value="X-ray"/>
    <property type="resolution" value="3.00 A"/>
    <property type="chains" value="C=19-134"/>
</dbReference>
<dbReference type="PDB" id="7OLY">
    <property type="method" value="X-ray"/>
    <property type="resolution" value="3.27 A"/>
    <property type="chains" value="C=19-134"/>
</dbReference>
<dbReference type="PDBsum" id="2H62"/>
<dbReference type="PDBsum" id="2QLU"/>
<dbReference type="PDBsum" id="4FAO"/>
<dbReference type="PDBsum" id="5NGV"/>
<dbReference type="PDBsum" id="5NHR"/>
<dbReference type="PDBsum" id="7MRZ"/>
<dbReference type="PDBsum" id="7OLY"/>
<dbReference type="SMR" id="Q13705"/>
<dbReference type="BioGRID" id="106608">
    <property type="interactions" value="100"/>
</dbReference>
<dbReference type="CORUM" id="Q13705"/>
<dbReference type="FunCoup" id="Q13705">
    <property type="interactions" value="1277"/>
</dbReference>
<dbReference type="IntAct" id="Q13705">
    <property type="interactions" value="72"/>
</dbReference>
<dbReference type="MINT" id="Q13705"/>
<dbReference type="STRING" id="9606.ENSP00000340361"/>
<dbReference type="BindingDB" id="Q13705"/>
<dbReference type="ChEMBL" id="CHEMBL5466"/>
<dbReference type="DrugCentral" id="Q13705"/>
<dbReference type="GuidetoPHARMACOLOGY" id="1792"/>
<dbReference type="GlyCosmos" id="Q13705">
    <property type="glycosylation" value="2 sites, No reported glycans"/>
</dbReference>
<dbReference type="GlyGen" id="Q13705">
    <property type="glycosylation" value="3 sites, 1 N-linked glycan (1 site)"/>
</dbReference>
<dbReference type="iPTMnet" id="Q13705"/>
<dbReference type="PhosphoSitePlus" id="Q13705"/>
<dbReference type="BioMuta" id="ACVR2B"/>
<dbReference type="DMDM" id="97535735"/>
<dbReference type="jPOST" id="Q13705"/>
<dbReference type="MassIVE" id="Q13705"/>
<dbReference type="PaxDb" id="9606-ENSP00000340361"/>
<dbReference type="PeptideAtlas" id="Q13705"/>
<dbReference type="ProteomicsDB" id="59666">
    <molecule id="Q13705-1"/>
</dbReference>
<dbReference type="Pumba" id="Q13705"/>
<dbReference type="ABCD" id="Q13705">
    <property type="antibodies" value="1 sequenced antibody"/>
</dbReference>
<dbReference type="Antibodypedia" id="12076">
    <property type="antibodies" value="480 antibodies from 33 providers"/>
</dbReference>
<dbReference type="DNASU" id="93"/>
<dbReference type="Ensembl" id="ENST00000352511.5">
    <molecule id="Q13705-1"/>
    <property type="protein sequence ID" value="ENSP00000340361.3"/>
    <property type="gene ID" value="ENSG00000114739.14"/>
</dbReference>
<dbReference type="GeneID" id="93"/>
<dbReference type="KEGG" id="hsa:93"/>
<dbReference type="MANE-Select" id="ENST00000352511.5">
    <property type="protein sequence ID" value="ENSP00000340361.3"/>
    <property type="RefSeq nucleotide sequence ID" value="NM_001106.4"/>
    <property type="RefSeq protein sequence ID" value="NP_001097.2"/>
</dbReference>
<dbReference type="UCSC" id="uc003cif.4">
    <molecule id="Q13705-1"/>
    <property type="organism name" value="human"/>
</dbReference>
<dbReference type="AGR" id="HGNC:174"/>
<dbReference type="CTD" id="93"/>
<dbReference type="DisGeNET" id="93"/>
<dbReference type="GeneCards" id="ACVR2B"/>
<dbReference type="HGNC" id="HGNC:174">
    <property type="gene designation" value="ACVR2B"/>
</dbReference>
<dbReference type="HPA" id="ENSG00000114739">
    <property type="expression patterns" value="Low tissue specificity"/>
</dbReference>
<dbReference type="MalaCards" id="ACVR2B"/>
<dbReference type="MIM" id="602730">
    <property type="type" value="gene"/>
</dbReference>
<dbReference type="MIM" id="613751">
    <property type="type" value="phenotype"/>
</dbReference>
<dbReference type="neXtProt" id="NX_Q13705"/>
<dbReference type="OpenTargets" id="ENSG00000114739"/>
<dbReference type="Orphanet" id="157769">
    <property type="disease" value="Situs ambiguus"/>
</dbReference>
<dbReference type="PharmGKB" id="PA24495"/>
<dbReference type="VEuPathDB" id="HostDB:ENSG00000114739"/>
<dbReference type="eggNOG" id="KOG3653">
    <property type="taxonomic scope" value="Eukaryota"/>
</dbReference>
<dbReference type="GeneTree" id="ENSGT00940000156210"/>
<dbReference type="HOGENOM" id="CLU_000288_8_4_1"/>
<dbReference type="InParanoid" id="Q13705"/>
<dbReference type="OMA" id="WLELCRI"/>
<dbReference type="OrthoDB" id="547665at2759"/>
<dbReference type="PAN-GO" id="Q13705">
    <property type="GO annotations" value="7 GO annotations based on evolutionary models"/>
</dbReference>
<dbReference type="PhylomeDB" id="Q13705"/>
<dbReference type="TreeFam" id="TF352876"/>
<dbReference type="PathwayCommons" id="Q13705"/>
<dbReference type="Reactome" id="R-HSA-1181150">
    <property type="pathway name" value="Signaling by NODAL"/>
</dbReference>
<dbReference type="Reactome" id="R-HSA-1433617">
    <property type="pathway name" value="Regulation of signaling by NODAL"/>
</dbReference>
<dbReference type="Reactome" id="R-HSA-1502540">
    <property type="pathway name" value="Signaling by Activin"/>
</dbReference>
<dbReference type="Reactome" id="R-HSA-201451">
    <property type="pathway name" value="Signaling by BMP"/>
</dbReference>
<dbReference type="SignaLink" id="Q13705"/>
<dbReference type="SIGNOR" id="Q13705"/>
<dbReference type="BioGRID-ORCS" id="93">
    <property type="hits" value="19 hits in 1164 CRISPR screens"/>
</dbReference>
<dbReference type="ChiTaRS" id="ACVR2B">
    <property type="organism name" value="human"/>
</dbReference>
<dbReference type="EvolutionaryTrace" id="Q13705"/>
<dbReference type="GeneWiki" id="ACVR2B"/>
<dbReference type="GenomeRNAi" id="93"/>
<dbReference type="Pharos" id="Q13705">
    <property type="development level" value="Tchem"/>
</dbReference>
<dbReference type="PRO" id="PR:Q13705"/>
<dbReference type="Proteomes" id="UP000005640">
    <property type="component" value="Chromosome 3"/>
</dbReference>
<dbReference type="RNAct" id="Q13705">
    <property type="molecule type" value="protein"/>
</dbReference>
<dbReference type="Bgee" id="ENSG00000114739">
    <property type="expression patterns" value="Expressed in secondary oocyte and 186 other cell types or tissues"/>
</dbReference>
<dbReference type="GO" id="GO:0048179">
    <property type="term" value="C:activin receptor complex"/>
    <property type="evidence" value="ECO:0000318"/>
    <property type="project" value="GO_Central"/>
</dbReference>
<dbReference type="GO" id="GO:0005737">
    <property type="term" value="C:cytoplasm"/>
    <property type="evidence" value="ECO:0000314"/>
    <property type="project" value="HGNC-UCL"/>
</dbReference>
<dbReference type="GO" id="GO:0005886">
    <property type="term" value="C:plasma membrane"/>
    <property type="evidence" value="ECO:0000314"/>
    <property type="project" value="UniProt"/>
</dbReference>
<dbReference type="GO" id="GO:0032991">
    <property type="term" value="C:protein-containing complex"/>
    <property type="evidence" value="ECO:0000314"/>
    <property type="project" value="MGI"/>
</dbReference>
<dbReference type="GO" id="GO:0043235">
    <property type="term" value="C:receptor complex"/>
    <property type="evidence" value="ECO:0000353"/>
    <property type="project" value="BHF-UCL"/>
</dbReference>
<dbReference type="GO" id="GO:0048185">
    <property type="term" value="F:activin binding"/>
    <property type="evidence" value="ECO:0000318"/>
    <property type="project" value="GO_Central"/>
</dbReference>
<dbReference type="GO" id="GO:0017002">
    <property type="term" value="F:activin receptor activity"/>
    <property type="evidence" value="ECO:0000318"/>
    <property type="project" value="GO_Central"/>
</dbReference>
<dbReference type="GO" id="GO:0016362">
    <property type="term" value="F:activin receptor activity, type II"/>
    <property type="evidence" value="ECO:0000314"/>
    <property type="project" value="UniProt"/>
</dbReference>
<dbReference type="GO" id="GO:0005524">
    <property type="term" value="F:ATP binding"/>
    <property type="evidence" value="ECO:0007669"/>
    <property type="project" value="UniProtKB-KW"/>
</dbReference>
<dbReference type="GO" id="GO:0019838">
    <property type="term" value="F:growth factor binding"/>
    <property type="evidence" value="ECO:0000353"/>
    <property type="project" value="HGNC-UCL"/>
</dbReference>
<dbReference type="GO" id="GO:0019209">
    <property type="term" value="F:kinase activator activity"/>
    <property type="evidence" value="ECO:0007669"/>
    <property type="project" value="Ensembl"/>
</dbReference>
<dbReference type="GO" id="GO:0046872">
    <property type="term" value="F:metal ion binding"/>
    <property type="evidence" value="ECO:0007669"/>
    <property type="project" value="UniProtKB-KW"/>
</dbReference>
<dbReference type="GO" id="GO:0004674">
    <property type="term" value="F:protein serine/threonine kinase activity"/>
    <property type="evidence" value="ECO:0000315"/>
    <property type="project" value="HGNC-UCL"/>
</dbReference>
<dbReference type="GO" id="GO:0004712">
    <property type="term" value="F:protein serine/threonine/tyrosine kinase activity"/>
    <property type="evidence" value="ECO:0007669"/>
    <property type="project" value="Ensembl"/>
</dbReference>
<dbReference type="GO" id="GO:0032924">
    <property type="term" value="P:activin receptor signaling pathway"/>
    <property type="evidence" value="ECO:0000315"/>
    <property type="project" value="BHF-UCL"/>
</dbReference>
<dbReference type="GO" id="GO:0009952">
    <property type="term" value="P:anterior/posterior pattern specification"/>
    <property type="evidence" value="ECO:0000315"/>
    <property type="project" value="HGNC-UCL"/>
</dbReference>
<dbReference type="GO" id="GO:0060840">
    <property type="term" value="P:artery development"/>
    <property type="evidence" value="ECO:0000250"/>
    <property type="project" value="BHF-UCL"/>
</dbReference>
<dbReference type="GO" id="GO:0001974">
    <property type="term" value="P:blood vessel remodeling"/>
    <property type="evidence" value="ECO:0000250"/>
    <property type="project" value="BHF-UCL"/>
</dbReference>
<dbReference type="GO" id="GO:0030509">
    <property type="term" value="P:BMP signaling pathway"/>
    <property type="evidence" value="ECO:0000314"/>
    <property type="project" value="BHF-UCL"/>
</dbReference>
<dbReference type="GO" id="GO:0007178">
    <property type="term" value="P:cell surface receptor protein serine/threonine kinase signaling pathway"/>
    <property type="evidence" value="ECO:0000304"/>
    <property type="project" value="ProtInc"/>
</dbReference>
<dbReference type="GO" id="GO:0071363">
    <property type="term" value="P:cellular response to growth factor stimulus"/>
    <property type="evidence" value="ECO:0000318"/>
    <property type="project" value="GO_Central"/>
</dbReference>
<dbReference type="GO" id="GO:0007368">
    <property type="term" value="P:determination of left/right symmetry"/>
    <property type="evidence" value="ECO:0007669"/>
    <property type="project" value="Ensembl"/>
</dbReference>
<dbReference type="GO" id="GO:0048617">
    <property type="term" value="P:embryonic foregut morphogenesis"/>
    <property type="evidence" value="ECO:0007669"/>
    <property type="project" value="Ensembl"/>
</dbReference>
<dbReference type="GO" id="GO:0001702">
    <property type="term" value="P:gastrulation with mouth forming second"/>
    <property type="evidence" value="ECO:0007669"/>
    <property type="project" value="Ensembl"/>
</dbReference>
<dbReference type="GO" id="GO:0007507">
    <property type="term" value="P:heart development"/>
    <property type="evidence" value="ECO:0007669"/>
    <property type="project" value="Ensembl"/>
</dbReference>
<dbReference type="GO" id="GO:0030073">
    <property type="term" value="P:insulin secretion"/>
    <property type="evidence" value="ECO:0007669"/>
    <property type="project" value="Ensembl"/>
</dbReference>
<dbReference type="GO" id="GO:0006879">
    <property type="term" value="P:intracellular iron ion homeostasis"/>
    <property type="evidence" value="ECO:0000314"/>
    <property type="project" value="UniProt"/>
</dbReference>
<dbReference type="GO" id="GO:0001822">
    <property type="term" value="P:kidney development"/>
    <property type="evidence" value="ECO:0007669"/>
    <property type="project" value="Ensembl"/>
</dbReference>
<dbReference type="GO" id="GO:0030324">
    <property type="term" value="P:lung development"/>
    <property type="evidence" value="ECO:0007669"/>
    <property type="project" value="Ensembl"/>
</dbReference>
<dbReference type="GO" id="GO:0001946">
    <property type="term" value="P:lymphangiogenesis"/>
    <property type="evidence" value="ECO:0000250"/>
    <property type="project" value="BHF-UCL"/>
</dbReference>
<dbReference type="GO" id="GO:0060836">
    <property type="term" value="P:lymphatic endothelial cell differentiation"/>
    <property type="evidence" value="ECO:0000250"/>
    <property type="project" value="BHF-UCL"/>
</dbReference>
<dbReference type="GO" id="GO:0007498">
    <property type="term" value="P:mesoderm development"/>
    <property type="evidence" value="ECO:0007669"/>
    <property type="project" value="Ensembl"/>
</dbReference>
<dbReference type="GO" id="GO:0120163">
    <property type="term" value="P:negative regulation of cold-induced thermogenesis"/>
    <property type="evidence" value="ECO:0000250"/>
    <property type="project" value="YuBioLab"/>
</dbReference>
<dbReference type="GO" id="GO:0030279">
    <property type="term" value="P:negative regulation of ossification"/>
    <property type="evidence" value="ECO:0000250"/>
    <property type="project" value="UniProt"/>
</dbReference>
<dbReference type="GO" id="GO:0000122">
    <property type="term" value="P:negative regulation of transcription by RNA polymerase II"/>
    <property type="evidence" value="ECO:0000316"/>
    <property type="project" value="BHF-UCL"/>
</dbReference>
<dbReference type="GO" id="GO:0042475">
    <property type="term" value="P:odontogenesis of dentin-containing tooth"/>
    <property type="evidence" value="ECO:0007669"/>
    <property type="project" value="Ensembl"/>
</dbReference>
<dbReference type="GO" id="GO:0035265">
    <property type="term" value="P:organ growth"/>
    <property type="evidence" value="ECO:0007669"/>
    <property type="project" value="Ensembl"/>
</dbReference>
<dbReference type="GO" id="GO:0031016">
    <property type="term" value="P:pancreas development"/>
    <property type="evidence" value="ECO:0007669"/>
    <property type="project" value="Ensembl"/>
</dbReference>
<dbReference type="GO" id="GO:0007389">
    <property type="term" value="P:pattern specification process"/>
    <property type="evidence" value="ECO:0000318"/>
    <property type="project" value="GO_Central"/>
</dbReference>
<dbReference type="GO" id="GO:0032927">
    <property type="term" value="P:positive regulation of activin receptor signaling pathway"/>
    <property type="evidence" value="ECO:0000314"/>
    <property type="project" value="HGNC-UCL"/>
</dbReference>
<dbReference type="GO" id="GO:0030501">
    <property type="term" value="P:positive regulation of bone mineralization"/>
    <property type="evidence" value="ECO:0000315"/>
    <property type="project" value="BHF-UCL"/>
</dbReference>
<dbReference type="GO" id="GO:0045669">
    <property type="term" value="P:positive regulation of osteoblast differentiation"/>
    <property type="evidence" value="ECO:0000315"/>
    <property type="project" value="BHF-UCL"/>
</dbReference>
<dbReference type="GO" id="GO:0009791">
    <property type="term" value="P:post-embryonic development"/>
    <property type="evidence" value="ECO:0007669"/>
    <property type="project" value="Ensembl"/>
</dbReference>
<dbReference type="GO" id="GO:0006355">
    <property type="term" value="P:regulation of DNA-templated transcription"/>
    <property type="evidence" value="ECO:0000314"/>
    <property type="project" value="HGNC-UCL"/>
</dbReference>
<dbReference type="GO" id="GO:0009749">
    <property type="term" value="P:response to glucose"/>
    <property type="evidence" value="ECO:0007669"/>
    <property type="project" value="Ensembl"/>
</dbReference>
<dbReference type="GO" id="GO:0061298">
    <property type="term" value="P:retina vasculature development in camera-type eye"/>
    <property type="evidence" value="ECO:0000250"/>
    <property type="project" value="BHF-UCL"/>
</dbReference>
<dbReference type="GO" id="GO:0060021">
    <property type="term" value="P:roof of mouth development"/>
    <property type="evidence" value="ECO:0007669"/>
    <property type="project" value="Ensembl"/>
</dbReference>
<dbReference type="GO" id="GO:0007165">
    <property type="term" value="P:signal transduction"/>
    <property type="evidence" value="ECO:0000314"/>
    <property type="project" value="HGNC-UCL"/>
</dbReference>
<dbReference type="GO" id="GO:0048705">
    <property type="term" value="P:skeletal system morphogenesis"/>
    <property type="evidence" value="ECO:0007669"/>
    <property type="project" value="Ensembl"/>
</dbReference>
<dbReference type="GO" id="GO:0061450">
    <property type="term" value="P:trophoblast cell migration"/>
    <property type="evidence" value="ECO:0000304"/>
    <property type="project" value="UniProt"/>
</dbReference>
<dbReference type="GO" id="GO:0060841">
    <property type="term" value="P:venous blood vessel development"/>
    <property type="evidence" value="ECO:0000250"/>
    <property type="project" value="BHF-UCL"/>
</dbReference>
<dbReference type="CDD" id="cd14140">
    <property type="entry name" value="STKc_ACVR2b"/>
    <property type="match status" value="1"/>
</dbReference>
<dbReference type="CDD" id="cd23632">
    <property type="entry name" value="TFP_LU_ECD_ACVR2B"/>
    <property type="match status" value="1"/>
</dbReference>
<dbReference type="FunFam" id="1.10.510.10:FF:000099">
    <property type="entry name" value="Serine/threonine-protein kinase receptor"/>
    <property type="match status" value="1"/>
</dbReference>
<dbReference type="FunFam" id="2.10.60.10:FF:000002">
    <property type="entry name" value="Serine/threonine-protein kinase receptor"/>
    <property type="match status" value="1"/>
</dbReference>
<dbReference type="FunFam" id="3.30.200.20:FF:000094">
    <property type="entry name" value="Serine/threonine-protein kinase receptor"/>
    <property type="match status" value="1"/>
</dbReference>
<dbReference type="Gene3D" id="2.10.60.10">
    <property type="entry name" value="CD59"/>
    <property type="match status" value="1"/>
</dbReference>
<dbReference type="Gene3D" id="3.30.200.20">
    <property type="entry name" value="Phosphorylase Kinase, domain 1"/>
    <property type="match status" value="1"/>
</dbReference>
<dbReference type="Gene3D" id="1.10.510.10">
    <property type="entry name" value="Transferase(Phosphotransferase) domain 1"/>
    <property type="match status" value="1"/>
</dbReference>
<dbReference type="InterPro" id="IPR000472">
    <property type="entry name" value="Activin_recp"/>
</dbReference>
<dbReference type="InterPro" id="IPR011009">
    <property type="entry name" value="Kinase-like_dom_sf"/>
</dbReference>
<dbReference type="InterPro" id="IPR000719">
    <property type="entry name" value="Prot_kinase_dom"/>
</dbReference>
<dbReference type="InterPro" id="IPR008271">
    <property type="entry name" value="Ser/Thr_kinase_AS"/>
</dbReference>
<dbReference type="InterPro" id="IPR045860">
    <property type="entry name" value="Snake_toxin-like_sf"/>
</dbReference>
<dbReference type="InterPro" id="IPR000333">
    <property type="entry name" value="TGFB_receptor"/>
</dbReference>
<dbReference type="PANTHER" id="PTHR23255:SF70">
    <property type="entry name" value="ACTIVIN RECEPTOR TYPE-2B"/>
    <property type="match status" value="1"/>
</dbReference>
<dbReference type="PANTHER" id="PTHR23255">
    <property type="entry name" value="TRANSFORMING GROWTH FACTOR-BETA RECEPTOR TYPE I AND II"/>
    <property type="match status" value="1"/>
</dbReference>
<dbReference type="Pfam" id="PF01064">
    <property type="entry name" value="Activin_recp"/>
    <property type="match status" value="1"/>
</dbReference>
<dbReference type="Pfam" id="PF00069">
    <property type="entry name" value="Pkinase"/>
    <property type="match status" value="1"/>
</dbReference>
<dbReference type="PRINTS" id="PR00653">
    <property type="entry name" value="ACTIVIN2R"/>
</dbReference>
<dbReference type="SUPFAM" id="SSF56112">
    <property type="entry name" value="Protein kinase-like (PK-like)"/>
    <property type="match status" value="1"/>
</dbReference>
<dbReference type="SUPFAM" id="SSF57302">
    <property type="entry name" value="Snake toxin-like"/>
    <property type="match status" value="1"/>
</dbReference>
<dbReference type="PROSITE" id="PS50011">
    <property type="entry name" value="PROTEIN_KINASE_DOM"/>
    <property type="match status" value="1"/>
</dbReference>
<dbReference type="PROSITE" id="PS00108">
    <property type="entry name" value="PROTEIN_KINASE_ST"/>
    <property type="match status" value="1"/>
</dbReference>
<gene>
    <name type="primary">ACVR2B</name>
</gene>
<reference key="1">
    <citation type="journal article" date="1994" name="Blood">
        <title>Expression of type II activin receptor genes during differentiation of human K562 cells and cDNA cloning of the human type IIB activin receptor.</title>
        <authorList>
            <person name="Hilden K."/>
            <person name="Tuuri T."/>
            <person name="Eramaa M."/>
            <person name="Ritvos O."/>
        </authorList>
    </citation>
    <scope>NUCLEOTIDE SEQUENCE [MRNA]</scope>
    <source>
        <tissue>Brain</tissue>
    </source>
</reference>
<reference key="2">
    <citation type="journal article" date="1998" name="J. Hum. Genet.">
        <title>Genomic organization and mapping of the human activin receptor type IIB (hActR-IIB) gene.</title>
        <authorList>
            <person name="Ishikawa S."/>
            <person name="Kai M."/>
            <person name="Murata Y."/>
            <person name="Tamari M."/>
            <person name="Daigo Y."/>
            <person name="Murano T."/>
            <person name="Ogawa M."/>
            <person name="Nakamura Y."/>
        </authorList>
    </citation>
    <scope>NUCLEOTIDE SEQUENCE [GENOMIC DNA]</scope>
    <scope>VARIANT ASP-459</scope>
</reference>
<reference key="3">
    <citation type="journal article" date="1999" name="Am. J. Med. Genet.">
        <title>Left-right axis malformations associated with mutations in ACVR2B, the gene for human activin receptor type IIB.</title>
        <authorList>
            <person name="Kosaki R."/>
            <person name="Gebbia M."/>
            <person name="Kosaki K."/>
            <person name="Lewin M."/>
            <person name="Bowers P."/>
            <person name="Towbin J.A."/>
            <person name="Casey B."/>
        </authorList>
    </citation>
    <scope>NUCLEOTIDE SEQUENCE [GENOMIC DNA]</scope>
    <scope>ALTERNATIVE SPLICING</scope>
    <scope>VARIANTS HTX4 HIS-40 AND ILE-494</scope>
</reference>
<reference key="4">
    <citation type="journal article" date="2004" name="Genome Res.">
        <title>The status, quality, and expansion of the NIH full-length cDNA project: the Mammalian Gene Collection (MGC).</title>
        <authorList>
            <consortium name="The MGC Project Team"/>
        </authorList>
    </citation>
    <scope>NUCLEOTIDE SEQUENCE [LARGE SCALE MRNA]</scope>
</reference>
<reference key="5">
    <citation type="journal article" date="1996" name="Mol. Cell. Biol.">
        <title>Activation of signalling by the activin receptor complex.</title>
        <authorList>
            <person name="Attisano L."/>
            <person name="Wrana J.L."/>
            <person name="Montalvo E."/>
            <person name="Massague J."/>
        </authorList>
    </citation>
    <scope>PHOSPHORYLATION</scope>
    <scope>INTERACTION WITH ACVR1B</scope>
    <scope>FUNCTION IN PHOSPHORYLATION OF ACVR1B</scope>
</reference>
<reference key="6">
    <citation type="journal article" date="2003" name="EMBO J.">
        <title>TLP, a novel modulator of TGF-beta signaling, has opposite effects on Smad2- and Smad3-dependent signaling.</title>
        <authorList>
            <person name="Felici A."/>
            <person name="Wurthner J.U."/>
            <person name="Parks W.T."/>
            <person name="Giam L.R."/>
            <person name="Reiss M."/>
            <person name="Karpova T.S."/>
            <person name="McNally J.G."/>
            <person name="Roberts A.B."/>
        </authorList>
    </citation>
    <scope>INTERACTION WITH VPS39</scope>
</reference>
<reference key="7">
    <citation type="journal article" date="2008" name="FEBS J.">
        <title>Type I receptor binding of bone morphogenetic protein 6 is dependent on N-glycosylation of the ligand.</title>
        <authorList>
            <person name="Saremba S."/>
            <person name="Nickel J."/>
            <person name="Seher A."/>
            <person name="Kotzsch A."/>
            <person name="Sebald W."/>
            <person name="Mueller T.D."/>
        </authorList>
    </citation>
    <scope>INTERACTION WITH BMP6</scope>
</reference>
<reference key="8">
    <citation type="journal article" date="2019" name="J. Exp. Clin. Cancer Res.">
        <title>BMP3 suppresses colon tumorigenesis via ActRIIB/SMAD2-dependent and TAK1/JNK signaling pathways.</title>
        <authorList>
            <person name="Wen J."/>
            <person name="Liu X."/>
            <person name="Qi Y."/>
            <person name="Niu F."/>
            <person name="Niu Z."/>
            <person name="Geng W."/>
            <person name="Zou Z."/>
            <person name="Huang R."/>
            <person name="Wang J."/>
            <person name="Zou H."/>
        </authorList>
    </citation>
    <scope>INTERACTION WITH BMP3</scope>
    <scope>SUBCELLULAR LOCATION</scope>
</reference>
<reference evidence="16" key="9">
    <citation type="journal article" date="2007" name="BMC Struct. Biol.">
        <title>A silent H-bond can be mutationally activated for high-affinity interaction of BMP-2 and activin type IIB receptor.</title>
        <authorList>
            <person name="Weber D."/>
            <person name="Kotzsch A."/>
            <person name="Nickel J."/>
            <person name="Harth S."/>
            <person name="Seher A."/>
            <person name="Mueller U."/>
            <person name="Sebald W."/>
            <person name="Mueller T.D."/>
        </authorList>
    </citation>
    <scope>X-RAY CRYSTALLOGRAPHY (1.85 ANGSTROMS) OF 19-116</scope>
    <scope>INTERACTION WITH BMP2</scope>
</reference>
<reference key="10">
    <citation type="journal article" date="2012" name="J. Biol. Chem.">
        <title>Specificity and structure of a high affinity activin receptor-like kinase 1 (ALK1) signaling complex.</title>
        <authorList>
            <person name="Townson S.A."/>
            <person name="Martinez-Hackert E."/>
            <person name="Greppi C."/>
            <person name="Lowden P."/>
            <person name="Sako D."/>
            <person name="Liu J."/>
            <person name="Ucran J.A."/>
            <person name="Liharska K."/>
            <person name="Underwood K.W."/>
            <person name="Seehra J."/>
            <person name="Kumar R."/>
            <person name="Grinberg A.V."/>
        </authorList>
    </citation>
    <scope>X-RAY CRYSTALLOGRAPHY (3.36 ANGSTROMS) OF 19-134 IN COMPLEX WITH ACVRL1 AND BMP9</scope>
    <scope>DISULFIDE BONDS</scope>
    <scope>GLYCOSYLATION AT ASN-42 AND ASN-65</scope>
</reference>
<reference key="11">
    <citation type="journal article" date="2007" name="Nature">
        <title>Patterns of somatic mutation in human cancer genomes.</title>
        <authorList>
            <person name="Greenman C."/>
            <person name="Stephens P."/>
            <person name="Smith R."/>
            <person name="Dalgliesh G.L."/>
            <person name="Hunter C."/>
            <person name="Bignell G."/>
            <person name="Davies H."/>
            <person name="Teague J."/>
            <person name="Butler A."/>
            <person name="Stevens C."/>
            <person name="Edkins S."/>
            <person name="O'Meara S."/>
            <person name="Vastrik I."/>
            <person name="Schmidt E.E."/>
            <person name="Avis T."/>
            <person name="Barthorpe S."/>
            <person name="Bhamra G."/>
            <person name="Buck G."/>
            <person name="Choudhury B."/>
            <person name="Clements J."/>
            <person name="Cole J."/>
            <person name="Dicks E."/>
            <person name="Forbes S."/>
            <person name="Gray K."/>
            <person name="Halliday K."/>
            <person name="Harrison R."/>
            <person name="Hills K."/>
            <person name="Hinton J."/>
            <person name="Jenkinson A."/>
            <person name="Jones D."/>
            <person name="Menzies A."/>
            <person name="Mironenko T."/>
            <person name="Perry J."/>
            <person name="Raine K."/>
            <person name="Richardson D."/>
            <person name="Shepherd R."/>
            <person name="Small A."/>
            <person name="Tofts C."/>
            <person name="Varian J."/>
            <person name="Webb T."/>
            <person name="West S."/>
            <person name="Widaa S."/>
            <person name="Yates A."/>
            <person name="Cahill D.P."/>
            <person name="Louis D.N."/>
            <person name="Goldstraw P."/>
            <person name="Nicholson A.G."/>
            <person name="Brasseur F."/>
            <person name="Looijenga L."/>
            <person name="Weber B.L."/>
            <person name="Chiew Y.-E."/>
            <person name="DeFazio A."/>
            <person name="Greaves M.F."/>
            <person name="Green A.R."/>
            <person name="Campbell P."/>
            <person name="Birney E."/>
            <person name="Easton D.F."/>
            <person name="Chenevix-Trench G."/>
            <person name="Tan M.-H."/>
            <person name="Khoo S.K."/>
            <person name="Teh B.T."/>
            <person name="Yuen S.T."/>
            <person name="Leung S.Y."/>
            <person name="Wooster R."/>
            <person name="Futreal P.A."/>
            <person name="Stratton M.R."/>
        </authorList>
    </citation>
    <scope>VARIANT [LARGE SCALE ANALYSIS] ARG-176</scope>
</reference>
<protein>
    <recommendedName>
        <fullName>Activin receptor type-2B</fullName>
        <ecNumber>2.7.11.30</ecNumber>
    </recommendedName>
    <alternativeName>
        <fullName>Activin receptor type IIB</fullName>
        <shortName>ACTR-IIB</shortName>
    </alternativeName>
</protein>
<keyword id="KW-0002">3D-structure</keyword>
<keyword id="KW-0025">Alternative splicing</keyword>
<keyword id="KW-0067">ATP-binding</keyword>
<keyword id="KW-1003">Cell membrane</keyword>
<keyword id="KW-0225">Disease variant</keyword>
<keyword id="KW-1015">Disulfide bond</keyword>
<keyword id="KW-0325">Glycoprotein</keyword>
<keyword id="KW-1056">Heterotaxy</keyword>
<keyword id="KW-0418">Kinase</keyword>
<keyword id="KW-0460">Magnesium</keyword>
<keyword id="KW-0464">Manganese</keyword>
<keyword id="KW-0472">Membrane</keyword>
<keyword id="KW-0479">Metal-binding</keyword>
<keyword id="KW-0547">Nucleotide-binding</keyword>
<keyword id="KW-0597">Phosphoprotein</keyword>
<keyword id="KW-1267">Proteomics identification</keyword>
<keyword id="KW-0675">Receptor</keyword>
<keyword id="KW-1185">Reference proteome</keyword>
<keyword id="KW-0723">Serine/threonine-protein kinase</keyword>
<keyword id="KW-0732">Signal</keyword>
<keyword id="KW-0808">Transferase</keyword>
<keyword id="KW-0812">Transmembrane</keyword>
<keyword id="KW-1133">Transmembrane helix</keyword>
<evidence type="ECO:0000250" key="1"/>
<evidence type="ECO:0000250" key="2">
    <source>
        <dbReference type="UniProtKB" id="P27040"/>
    </source>
</evidence>
<evidence type="ECO:0000255" key="3"/>
<evidence type="ECO:0000255" key="4">
    <source>
        <dbReference type="PROSITE-ProRule" id="PRU00159"/>
    </source>
</evidence>
<evidence type="ECO:0000255" key="5">
    <source>
        <dbReference type="PROSITE-ProRule" id="PRU10027"/>
    </source>
</evidence>
<evidence type="ECO:0000269" key="6">
    <source>
    </source>
</evidence>
<evidence type="ECO:0000269" key="7">
    <source>
    </source>
</evidence>
<evidence type="ECO:0000269" key="8">
    <source>
    </source>
</evidence>
<evidence type="ECO:0000269" key="9">
    <source>
    </source>
</evidence>
<evidence type="ECO:0000269" key="10">
    <source>
    </source>
</evidence>
<evidence type="ECO:0000269" key="11">
    <source>
    </source>
</evidence>
<evidence type="ECO:0000269" key="12">
    <source>
    </source>
</evidence>
<evidence type="ECO:0000269" key="13">
    <source>
    </source>
</evidence>
<evidence type="ECO:0000269" key="14">
    <source>
    </source>
</evidence>
<evidence type="ECO:0000305" key="15"/>
<evidence type="ECO:0007744" key="16">
    <source>
        <dbReference type="PDB" id="2H62"/>
    </source>
</evidence>
<evidence type="ECO:0007829" key="17">
    <source>
        <dbReference type="PDB" id="2H62"/>
    </source>
</evidence>
<evidence type="ECO:0007829" key="18">
    <source>
        <dbReference type="PDB" id="2QLU"/>
    </source>
</evidence>
<evidence type="ECO:0007829" key="19">
    <source>
        <dbReference type="PDB" id="5NGV"/>
    </source>
</evidence>
<organism>
    <name type="scientific">Homo sapiens</name>
    <name type="common">Human</name>
    <dbReference type="NCBI Taxonomy" id="9606"/>
    <lineage>
        <taxon>Eukaryota</taxon>
        <taxon>Metazoa</taxon>
        <taxon>Chordata</taxon>
        <taxon>Craniata</taxon>
        <taxon>Vertebrata</taxon>
        <taxon>Euteleostomi</taxon>
        <taxon>Mammalia</taxon>
        <taxon>Eutheria</taxon>
        <taxon>Euarchontoglires</taxon>
        <taxon>Primates</taxon>
        <taxon>Haplorrhini</taxon>
        <taxon>Catarrhini</taxon>
        <taxon>Hominidae</taxon>
        <taxon>Homo</taxon>
    </lineage>
</organism>
<comment type="function">
    <text evidence="12">Transmembrane serine/threonine kinase activin type-2 receptor forming an activin receptor complex with activin type-1 serine/threonine kinase receptors (ACVR1, ACVR1B or ACVR1c). Transduces the activin signal from the cell surface to the cytoplasm and is thus regulating many physiological and pathological processes including neuronal differentiation and neuronal survival, hair follicle development and cycling, FSH production by the pituitary gland, wound healing, extracellular matrix production, immunosuppression and carcinogenesis. Activin is also thought to have a paracrine or autocrine role in follicular development in the ovary. Within the receptor complex, the type-2 receptors act as a primary activin receptors (binds activin-A/INHBA, activin-B/INHBB as well as inhibin-A/INHA-INHBA). The type-1 receptors like ACVR1B act as downstream transducers of activin signals. Activin binds to type-2 receptor at the plasma membrane and activates its serine-threonine kinase. The activated receptor type-2 then phosphorylates and activates the type-1 receptor. Once activated, the type-1 receptor binds and phosphorylates the SMAD proteins SMAD2 and SMAD3, on serine residues of the C-terminal tail. Soon after their association with the activin receptor and subsequent phosphorylation, SMAD2 and SMAD3 are released into the cytoplasm where they interact with the common partner SMAD4. This SMAD complex translocates into the nucleus where it mediates activin-induced transcription. Inhibitory SMAD7, which is recruited to ACVR1B through FKBP1A, can prevent the association of SMAD2 and SMAD3 with the activin receptor complex, thereby blocking the activin signal. Activin signal transduction is also antagonized by the binding to the receptor of inhibin-B via the IGSF1 inhibin coreceptor.</text>
</comment>
<comment type="catalytic activity">
    <reaction>
        <text>L-threonyl-[receptor-protein] + ATP = O-phospho-L-threonyl-[receptor-protein] + ADP + H(+)</text>
        <dbReference type="Rhea" id="RHEA:44880"/>
        <dbReference type="Rhea" id="RHEA-COMP:11024"/>
        <dbReference type="Rhea" id="RHEA-COMP:11025"/>
        <dbReference type="ChEBI" id="CHEBI:15378"/>
        <dbReference type="ChEBI" id="CHEBI:30013"/>
        <dbReference type="ChEBI" id="CHEBI:30616"/>
        <dbReference type="ChEBI" id="CHEBI:61977"/>
        <dbReference type="ChEBI" id="CHEBI:456216"/>
        <dbReference type="EC" id="2.7.11.30"/>
    </reaction>
</comment>
<comment type="catalytic activity">
    <reaction>
        <text>L-seryl-[receptor-protein] + ATP = O-phospho-L-seryl-[receptor-protein] + ADP + H(+)</text>
        <dbReference type="Rhea" id="RHEA:18673"/>
        <dbReference type="Rhea" id="RHEA-COMP:11022"/>
        <dbReference type="Rhea" id="RHEA-COMP:11023"/>
        <dbReference type="ChEBI" id="CHEBI:15378"/>
        <dbReference type="ChEBI" id="CHEBI:29999"/>
        <dbReference type="ChEBI" id="CHEBI:30616"/>
        <dbReference type="ChEBI" id="CHEBI:83421"/>
        <dbReference type="ChEBI" id="CHEBI:456216"/>
        <dbReference type="EC" id="2.7.11.30"/>
    </reaction>
</comment>
<comment type="cofactor">
    <cofactor evidence="1">
        <name>Mg(2+)</name>
        <dbReference type="ChEBI" id="CHEBI:18420"/>
    </cofactor>
    <cofactor evidence="1">
        <name>Mn(2+)</name>
        <dbReference type="ChEBI" id="CHEBI:29035"/>
    </cofactor>
</comment>
<comment type="subunit">
    <text evidence="2 6 7 9 10 11 12">Forms an activin receptor complex with activin type II receptors such as ACVR1B. Interacts with VPS39. Interacts with DYNLT1. Interacts with BMP3 (PubMed:31665064). Interacts with BMP2 (PubMed:17295905). Interacts with BMP6 (PubMed:18070108).</text>
</comment>
<comment type="interaction">
    <interactant intactId="EBI-1383577">
        <id>Q13705</id>
    </interactant>
    <interactant intactId="EBI-2363776">
        <id>O95390</id>
        <label>GDF11</label>
    </interactant>
    <organismsDiffer>false</organismsDiffer>
    <experiments>3</experiments>
</comment>
<comment type="interaction">
    <interactant intactId="EBI-1383577">
        <id>Q13705</id>
    </interactant>
    <interactant intactId="EBI-8542977">
        <id>O14793</id>
        <label>MSTN</label>
    </interactant>
    <organismsDiffer>false</organismsDiffer>
    <experiments>4</experiments>
</comment>
<comment type="subcellular location">
    <subcellularLocation>
        <location evidence="11">Cell membrane</location>
        <topology evidence="1">Single-pass type I membrane protein</topology>
    </subcellularLocation>
</comment>
<comment type="alternative products">
    <event type="alternative splicing"/>
    <isoform>
        <id>Q13705-1</id>
        <name>ActR-IIB2</name>
        <sequence type="displayed"/>
    </isoform>
    <isoform>
        <id>Q13705-2</id>
        <name>ActR-IIB1</name>
        <sequence type="not described"/>
    </isoform>
</comment>
<comment type="PTM">
    <text evidence="12">Phosphorylated. Constitutive phosphorylation is in part catalyzed by its own kinase activity.</text>
</comment>
<comment type="disease" evidence="14">
    <disease id="DI-01884">
        <name>Heterotaxy, visceral, 4, autosomal</name>
        <acronym>HTX4</acronym>
        <description>A form of visceral heterotaxy, a complex disorder due to disruption of the normal left-right asymmetry of the thoracoabdominal organs. Visceral heterotaxy or situs ambiguus results in randomization of the placement of visceral organs, including the heart, lungs, liver, spleen, and stomach. The organs are oriented randomly with respect to the left-right axis and with respect to one another. It can be associated with a variety of congenital defects including cardiac malformations. HTX4 clinical features include dextrocardia, right aortic arch and a right-sided spleen, anomalies of the inferior and the superior vena cava, atrial ventricular canal defect with dextro-transposed great arteries, pulmonary stenosis, polysplenia and midline liver.</description>
        <dbReference type="MIM" id="613751"/>
    </disease>
    <text>The disease is caused by variants affecting the gene represented in this entry.</text>
</comment>
<comment type="miscellaneous">
    <molecule>Isoform ActR-IIB1</molecule>
    <text evidence="15">Produced from the insertion in the transcript of 82 base pairs, leading to frameshift and protein truncation. May be not functional.</text>
</comment>
<comment type="similarity">
    <text evidence="15">Belongs to the protein kinase superfamily. TKL Ser/Thr protein kinase family. TGFB receptor subfamily.</text>
</comment>
<sequence length="512" mass="57724">MTAPWVALALLWGSLCAGSGRGEAETRECIYYNANWELERTNQSGLERCEGEQDKRLHCYASWRNSSGTIELVKKGCWLDDFNCYDRQECVATEENPQVYFCCCEGNFCNERFTHLPEAGGPEVTYEPPPTAPTLLTVLAYSLLPIGGLSLIVLLAFWMYRHRKPPYGHVDIHEDPGPPPPSPLVGLKPLQLLEIKARGRFGCVWKAQLMNDFVAVKIFPLQDKQSWQSEREIFSTPGMKHENLLQFIAAEKRGSNLEVELWLITAFHDKGSLTDYLKGNIITWNELCHVAETMSRGLSYLHEDVPWCRGEGHKPSIAHRDFKSKNVLLKSDLTAVLADFGLAVRFEPGKPPGDTHGQVGTRRYMAPEVLEGAINFQRDAFLRIDMYAMGLVLWELVSRCKAADGPVDEYMLPFEEEIGQHPSLEELQEVVVHKKMRPTIKDHWLKHPGLAQLCVTIEECWDHDAEARLSAGCVEERVSLIRRSVNGTTSDCLVSLVTSVTNVDLPPKESSI</sequence>
<feature type="signal peptide" evidence="3">
    <location>
        <begin position="1"/>
        <end position="18"/>
    </location>
</feature>
<feature type="chain" id="PRO_0000024404" description="Activin receptor type-2B">
    <location>
        <begin position="19"/>
        <end position="512"/>
    </location>
</feature>
<feature type="topological domain" description="Extracellular" evidence="3">
    <location>
        <begin position="19"/>
        <end position="137"/>
    </location>
</feature>
<feature type="transmembrane region" description="Helical" evidence="3">
    <location>
        <begin position="138"/>
        <end position="158"/>
    </location>
</feature>
<feature type="topological domain" description="Cytoplasmic" evidence="3">
    <location>
        <begin position="159"/>
        <end position="512"/>
    </location>
</feature>
<feature type="domain" description="Protein kinase" evidence="4">
    <location>
        <begin position="190"/>
        <end position="480"/>
    </location>
</feature>
<feature type="region of interest" description="Interaction with DYNLT1" evidence="2">
    <location>
        <begin position="491"/>
        <end position="512"/>
    </location>
</feature>
<feature type="active site" description="Proton acceptor" evidence="4 5">
    <location>
        <position position="321"/>
    </location>
</feature>
<feature type="binding site" evidence="4">
    <location>
        <begin position="196"/>
        <end position="204"/>
    </location>
    <ligand>
        <name>ATP</name>
        <dbReference type="ChEBI" id="CHEBI:30616"/>
    </ligand>
</feature>
<feature type="binding site" evidence="4">
    <location>
        <position position="217"/>
    </location>
    <ligand>
        <name>ATP</name>
        <dbReference type="ChEBI" id="CHEBI:30616"/>
    </ligand>
</feature>
<feature type="glycosylation site" description="N-linked (GlcNAc...) asparagine" evidence="10">
    <location>
        <position position="42"/>
    </location>
</feature>
<feature type="glycosylation site" description="N-linked (GlcNAc...) asparagine" evidence="10">
    <location>
        <position position="65"/>
    </location>
</feature>
<feature type="disulfide bond" evidence="10">
    <location>
        <begin position="29"/>
        <end position="59"/>
    </location>
</feature>
<feature type="disulfide bond" evidence="10">
    <location>
        <begin position="49"/>
        <end position="77"/>
    </location>
</feature>
<feature type="disulfide bond" evidence="10">
    <location>
        <begin position="84"/>
        <end position="103"/>
    </location>
</feature>
<feature type="disulfide bond" evidence="10">
    <location>
        <begin position="90"/>
        <end position="102"/>
    </location>
</feature>
<feature type="disulfide bond" evidence="10">
    <location>
        <begin position="104"/>
        <end position="109"/>
    </location>
</feature>
<feature type="sequence variant" id="VAR_013281" description="In HTX4; dbSNP:rs121434437." evidence="14">
    <original>R</original>
    <variation>H</variation>
    <location>
        <position position="40"/>
    </location>
</feature>
<feature type="sequence variant" id="VAR_041396" description="In dbSNP:rs35882617." evidence="8">
    <original>P</original>
    <variation>R</variation>
    <location>
        <position position="176"/>
    </location>
</feature>
<feature type="sequence variant" id="VAR_050594" description="In dbSNP:rs500611." evidence="13">
    <original>E</original>
    <variation>D</variation>
    <location>
        <position position="459"/>
    </location>
</feature>
<feature type="sequence variant" id="VAR_013282" description="In HTX4; dbSNP:rs121434438." evidence="14">
    <original>V</original>
    <variation>I</variation>
    <location>
        <position position="494"/>
    </location>
</feature>
<feature type="sequence conflict" description="In Ref. 1; CAA54671." evidence="15" ref="1">
    <original>CA</original>
    <variation>WP</variation>
    <location>
        <begin position="16"/>
        <end position="17"/>
    </location>
</feature>
<feature type="sequence conflict" description="In Ref. 1 and 2." evidence="15" ref="1 2">
    <original>R</original>
    <variation>A</variation>
    <location>
        <position position="64"/>
    </location>
</feature>
<feature type="sequence conflict" description="In Ref. 3; AAC64515." evidence="15" ref="3">
    <original>E</original>
    <variation>A</variation>
    <location>
        <position position="459"/>
    </location>
</feature>
<feature type="strand" evidence="17">
    <location>
        <begin position="27"/>
        <end position="33"/>
    </location>
</feature>
<feature type="helix" evidence="17">
    <location>
        <begin position="36"/>
        <end position="39"/>
    </location>
</feature>
<feature type="strand" evidence="17">
    <location>
        <begin position="43"/>
        <end position="49"/>
    </location>
</feature>
<feature type="strand" evidence="19">
    <location>
        <begin position="53"/>
        <end position="55"/>
    </location>
</feature>
<feature type="strand" evidence="17">
    <location>
        <begin position="57"/>
        <end position="66"/>
    </location>
</feature>
<feature type="strand" evidence="17">
    <location>
        <begin position="69"/>
        <end position="79"/>
    </location>
</feature>
<feature type="helix" evidence="17">
    <location>
        <begin position="82"/>
        <end position="84"/>
    </location>
</feature>
<feature type="strand" evidence="17">
    <location>
        <begin position="88"/>
        <end position="91"/>
    </location>
</feature>
<feature type="strand" evidence="19">
    <location>
        <begin position="94"/>
        <end position="96"/>
    </location>
</feature>
<feature type="strand" evidence="17">
    <location>
        <begin position="98"/>
        <end position="106"/>
    </location>
</feature>
<feature type="turn" evidence="17">
    <location>
        <begin position="107"/>
        <end position="110"/>
    </location>
</feature>
<feature type="strand" evidence="17">
    <location>
        <begin position="111"/>
        <end position="114"/>
    </location>
</feature>
<feature type="strand" evidence="18">
    <location>
        <begin position="191"/>
        <end position="197"/>
    </location>
</feature>
<feature type="strand" evidence="18">
    <location>
        <begin position="200"/>
        <end position="209"/>
    </location>
</feature>
<feature type="strand" evidence="18">
    <location>
        <begin position="212"/>
        <end position="219"/>
    </location>
</feature>
<feature type="helix" evidence="18">
    <location>
        <begin position="221"/>
        <end position="223"/>
    </location>
</feature>
<feature type="helix" evidence="18">
    <location>
        <begin position="224"/>
        <end position="235"/>
    </location>
</feature>
<feature type="strand" evidence="18">
    <location>
        <begin position="247"/>
        <end position="253"/>
    </location>
</feature>
<feature type="turn" evidence="18">
    <location>
        <begin position="256"/>
        <end position="258"/>
    </location>
</feature>
<feature type="strand" evidence="18">
    <location>
        <begin position="260"/>
        <end position="266"/>
    </location>
</feature>
<feature type="helix" evidence="18">
    <location>
        <begin position="273"/>
        <end position="279"/>
    </location>
</feature>
<feature type="helix" evidence="18">
    <location>
        <begin position="284"/>
        <end position="302"/>
    </location>
</feature>
<feature type="strand" evidence="18">
    <location>
        <begin position="305"/>
        <end position="308"/>
    </location>
</feature>
<feature type="turn" evidence="18">
    <location>
        <begin position="309"/>
        <end position="311"/>
    </location>
</feature>
<feature type="strand" evidence="18">
    <location>
        <begin position="312"/>
        <end position="314"/>
    </location>
</feature>
<feature type="strand" evidence="18">
    <location>
        <begin position="316"/>
        <end position="318"/>
    </location>
</feature>
<feature type="helix" evidence="18">
    <location>
        <begin position="324"/>
        <end position="326"/>
    </location>
</feature>
<feature type="strand" evidence="18">
    <location>
        <begin position="327"/>
        <end position="329"/>
    </location>
</feature>
<feature type="strand" evidence="18">
    <location>
        <begin position="335"/>
        <end position="337"/>
    </location>
</feature>
<feature type="strand" evidence="18">
    <location>
        <begin position="344"/>
        <end position="346"/>
    </location>
</feature>
<feature type="helix" evidence="18">
    <location>
        <begin position="362"/>
        <end position="364"/>
    </location>
</feature>
<feature type="helix" evidence="18">
    <location>
        <begin position="367"/>
        <end position="370"/>
    </location>
</feature>
<feature type="helix" evidence="18">
    <location>
        <begin position="378"/>
        <end position="398"/>
    </location>
</feature>
<feature type="turn" evidence="18">
    <location>
        <begin position="413"/>
        <end position="417"/>
    </location>
</feature>
<feature type="helix" evidence="18">
    <location>
        <begin position="424"/>
        <end position="431"/>
    </location>
</feature>
<feature type="helix" evidence="18">
    <location>
        <begin position="442"/>
        <end position="446"/>
    </location>
</feature>
<feature type="helix" evidence="18">
    <location>
        <begin position="448"/>
        <end position="460"/>
    </location>
</feature>
<feature type="helix" evidence="18">
    <location>
        <begin position="465"/>
        <end position="467"/>
    </location>
</feature>
<feature type="helix" evidence="18">
    <location>
        <begin position="471"/>
        <end position="482"/>
    </location>
</feature>
<name>AVR2B_HUMAN</name>
<proteinExistence type="evidence at protein level"/>